<gene>
    <name evidence="1" type="primary">purL</name>
    <name type="ordered locus">OB0745</name>
</gene>
<evidence type="ECO:0000255" key="1">
    <source>
        <dbReference type="HAMAP-Rule" id="MF_00420"/>
    </source>
</evidence>
<reference key="1">
    <citation type="journal article" date="2002" name="Nucleic Acids Res.">
        <title>Genome sequence of Oceanobacillus iheyensis isolated from the Iheya Ridge and its unexpected adaptive capabilities to extreme environments.</title>
        <authorList>
            <person name="Takami H."/>
            <person name="Takaki Y."/>
            <person name="Uchiyama I."/>
        </authorList>
    </citation>
    <scope>NUCLEOTIDE SEQUENCE [LARGE SCALE GENOMIC DNA]</scope>
    <source>
        <strain>DSM 14371 / CIP 107618 / JCM 11309 / KCTC 3954 / HTE831</strain>
    </source>
</reference>
<comment type="function">
    <text evidence="1">Part of the phosphoribosylformylglycinamidine synthase complex involved in the purines biosynthetic pathway. Catalyzes the ATP-dependent conversion of formylglycinamide ribonucleotide (FGAR) and glutamine to yield formylglycinamidine ribonucleotide (FGAM) and glutamate. The FGAM synthase complex is composed of three subunits. PurQ produces an ammonia molecule by converting glutamine to glutamate. PurL transfers the ammonia molecule to FGAR to form FGAM in an ATP-dependent manner. PurS interacts with PurQ and PurL and is thought to assist in the transfer of the ammonia molecule from PurQ to PurL.</text>
</comment>
<comment type="catalytic activity">
    <reaction evidence="1">
        <text>N(2)-formyl-N(1)-(5-phospho-beta-D-ribosyl)glycinamide + L-glutamine + ATP + H2O = 2-formamido-N(1)-(5-O-phospho-beta-D-ribosyl)acetamidine + L-glutamate + ADP + phosphate + H(+)</text>
        <dbReference type="Rhea" id="RHEA:17129"/>
        <dbReference type="ChEBI" id="CHEBI:15377"/>
        <dbReference type="ChEBI" id="CHEBI:15378"/>
        <dbReference type="ChEBI" id="CHEBI:29985"/>
        <dbReference type="ChEBI" id="CHEBI:30616"/>
        <dbReference type="ChEBI" id="CHEBI:43474"/>
        <dbReference type="ChEBI" id="CHEBI:58359"/>
        <dbReference type="ChEBI" id="CHEBI:147286"/>
        <dbReference type="ChEBI" id="CHEBI:147287"/>
        <dbReference type="ChEBI" id="CHEBI:456216"/>
        <dbReference type="EC" id="6.3.5.3"/>
    </reaction>
</comment>
<comment type="pathway">
    <text evidence="1">Purine metabolism; IMP biosynthesis via de novo pathway; 5-amino-1-(5-phospho-D-ribosyl)imidazole from N(2)-formyl-N(1)-(5-phospho-D-ribosyl)glycinamide: step 1/2.</text>
</comment>
<comment type="subunit">
    <text evidence="1">Monomer. Part of the FGAM synthase complex composed of 1 PurL, 1 PurQ and 2 PurS subunits.</text>
</comment>
<comment type="subcellular location">
    <subcellularLocation>
        <location evidence="1">Cytoplasm</location>
    </subcellularLocation>
</comment>
<comment type="similarity">
    <text evidence="1">Belongs to the FGAMS family.</text>
</comment>
<sequence>MQLTHDIQPEKIEKDRLYLDMGLSDEEFQRIKQILGRHPNFTETGIFSVMWSEHCSYKTSKPLLKKFPTDGPHVLQGPGEGAGVIDIGDEQAVVFKIESHNHPSAVEPYQGAATGVGGIIRDVFSMGARPIASLNSLRFGPLTNNRTKYLFSEVVAGIAGYGNCVGVPTVGGEVQFDESYEDNPLVNAMCVGLINHKDVQKGIAAGIGNTILYAGPPTGRDGIHGATFASDDLAEDSNKDRPAVQVGDPFMEKLLIEACLEVIQSDALVGIQDMGAAGLTSSASEMASKAGTGLEMNLDLVPQREQGMTAYEMMLSESQERMLLCVQAGREQEIIDIFEKYGLKSVPVGKVIEEKVFRIKHLDEVVADIPVDSLADDAPVYNMPSKEAAYYRAFQQMDIATPAIEDYANTLKQLLQQPTIANKEWVYDQYDSMVQTNTVVTPGSDAAVVRIKGTEKALAMTTDCNSRYIYLDPETGGKIAVAEAARNIVCSGAKPLGLTDGLNFGNPTNPEIFWQMEKSVEGMSAACDALHTPVISGNVSLYNQSKGKSIYPTPIVGMVGLHESTQHITPSYFQEKEDVIYCIGEAKAEFGGSELQHLYSGKYEGKAPHIDLDVEAERQEKLLSAIKEGIISSAHDISEGGLAIALAESLFNGQGLGAEINVVGDATVELFSESQSRFLVSVNKKHANAFESHFPEAAKLGKVTDQGQLTISISDKTIIHERVEELENLWKGAIPCLLKSKA</sequence>
<protein>
    <recommendedName>
        <fullName evidence="1">Phosphoribosylformylglycinamidine synthase subunit PurL</fullName>
        <shortName evidence="1">FGAM synthase</shortName>
        <ecNumber evidence="1">6.3.5.3</ecNumber>
    </recommendedName>
    <alternativeName>
        <fullName evidence="1">Formylglycinamide ribonucleotide amidotransferase subunit II</fullName>
        <shortName evidence="1">FGAR amidotransferase II</shortName>
        <shortName evidence="1">FGAR-AT II</shortName>
    </alternativeName>
    <alternativeName>
        <fullName evidence="1">Glutamine amidotransferase PurL</fullName>
    </alternativeName>
    <alternativeName>
        <fullName evidence="1">Phosphoribosylformylglycinamidine synthase subunit II</fullName>
    </alternativeName>
</protein>
<dbReference type="EC" id="6.3.5.3" evidence="1"/>
<dbReference type="EMBL" id="BA000028">
    <property type="protein sequence ID" value="BAC12701.1"/>
    <property type="molecule type" value="Genomic_DNA"/>
</dbReference>
<dbReference type="RefSeq" id="WP_011065153.1">
    <property type="nucleotide sequence ID" value="NC_004193.1"/>
</dbReference>
<dbReference type="SMR" id="Q8ES96"/>
<dbReference type="STRING" id="221109.gene:10732966"/>
<dbReference type="KEGG" id="oih:OB0745"/>
<dbReference type="eggNOG" id="COG0046">
    <property type="taxonomic scope" value="Bacteria"/>
</dbReference>
<dbReference type="HOGENOM" id="CLU_003100_0_1_9"/>
<dbReference type="OrthoDB" id="9804441at2"/>
<dbReference type="PhylomeDB" id="Q8ES96"/>
<dbReference type="UniPathway" id="UPA00074">
    <property type="reaction ID" value="UER00128"/>
</dbReference>
<dbReference type="Proteomes" id="UP000000822">
    <property type="component" value="Chromosome"/>
</dbReference>
<dbReference type="GO" id="GO:0005737">
    <property type="term" value="C:cytoplasm"/>
    <property type="evidence" value="ECO:0007669"/>
    <property type="project" value="UniProtKB-SubCell"/>
</dbReference>
<dbReference type="GO" id="GO:0005524">
    <property type="term" value="F:ATP binding"/>
    <property type="evidence" value="ECO:0007669"/>
    <property type="project" value="UniProtKB-UniRule"/>
</dbReference>
<dbReference type="GO" id="GO:0000287">
    <property type="term" value="F:magnesium ion binding"/>
    <property type="evidence" value="ECO:0007669"/>
    <property type="project" value="UniProtKB-UniRule"/>
</dbReference>
<dbReference type="GO" id="GO:0004642">
    <property type="term" value="F:phosphoribosylformylglycinamidine synthase activity"/>
    <property type="evidence" value="ECO:0007669"/>
    <property type="project" value="UniProtKB-UniRule"/>
</dbReference>
<dbReference type="GO" id="GO:0006189">
    <property type="term" value="P:'de novo' IMP biosynthetic process"/>
    <property type="evidence" value="ECO:0007669"/>
    <property type="project" value="UniProtKB-UniRule"/>
</dbReference>
<dbReference type="CDD" id="cd02203">
    <property type="entry name" value="PurL_repeat1"/>
    <property type="match status" value="1"/>
</dbReference>
<dbReference type="CDD" id="cd02204">
    <property type="entry name" value="PurL_repeat2"/>
    <property type="match status" value="1"/>
</dbReference>
<dbReference type="FunFam" id="3.30.1330.10:FF:000004">
    <property type="entry name" value="Phosphoribosylformylglycinamidine synthase subunit PurL"/>
    <property type="match status" value="1"/>
</dbReference>
<dbReference type="FunFam" id="3.90.650.10:FF:000009">
    <property type="entry name" value="Phosphoribosylformylglycinamidine synthase subunit PurL"/>
    <property type="match status" value="1"/>
</dbReference>
<dbReference type="Gene3D" id="3.90.650.10">
    <property type="entry name" value="PurM-like C-terminal domain"/>
    <property type="match status" value="2"/>
</dbReference>
<dbReference type="Gene3D" id="3.30.1330.10">
    <property type="entry name" value="PurM-like, N-terminal domain"/>
    <property type="match status" value="2"/>
</dbReference>
<dbReference type="HAMAP" id="MF_00420">
    <property type="entry name" value="PurL_2"/>
    <property type="match status" value="1"/>
</dbReference>
<dbReference type="InterPro" id="IPR010074">
    <property type="entry name" value="PRibForGlyAmidine_synth_PurL"/>
</dbReference>
<dbReference type="InterPro" id="IPR041609">
    <property type="entry name" value="PurL_linker"/>
</dbReference>
<dbReference type="InterPro" id="IPR010918">
    <property type="entry name" value="PurM-like_C_dom"/>
</dbReference>
<dbReference type="InterPro" id="IPR036676">
    <property type="entry name" value="PurM-like_C_sf"/>
</dbReference>
<dbReference type="InterPro" id="IPR016188">
    <property type="entry name" value="PurM-like_N"/>
</dbReference>
<dbReference type="InterPro" id="IPR036921">
    <property type="entry name" value="PurM-like_N_sf"/>
</dbReference>
<dbReference type="NCBIfam" id="TIGR01736">
    <property type="entry name" value="FGAM_synth_II"/>
    <property type="match status" value="1"/>
</dbReference>
<dbReference type="NCBIfam" id="NF002290">
    <property type="entry name" value="PRK01213.1"/>
    <property type="match status" value="1"/>
</dbReference>
<dbReference type="PANTHER" id="PTHR43555">
    <property type="entry name" value="PHOSPHORIBOSYLFORMYLGLYCINAMIDINE SYNTHASE SUBUNIT PURL"/>
    <property type="match status" value="1"/>
</dbReference>
<dbReference type="PANTHER" id="PTHR43555:SF1">
    <property type="entry name" value="PHOSPHORIBOSYLFORMYLGLYCINAMIDINE SYNTHASE SUBUNIT PURL"/>
    <property type="match status" value="1"/>
</dbReference>
<dbReference type="Pfam" id="PF00586">
    <property type="entry name" value="AIRS"/>
    <property type="match status" value="2"/>
</dbReference>
<dbReference type="Pfam" id="PF02769">
    <property type="entry name" value="AIRS_C"/>
    <property type="match status" value="2"/>
</dbReference>
<dbReference type="Pfam" id="PF18072">
    <property type="entry name" value="FGAR-AT_linker"/>
    <property type="match status" value="1"/>
</dbReference>
<dbReference type="PIRSF" id="PIRSF001587">
    <property type="entry name" value="FGAM_synthase_II"/>
    <property type="match status" value="1"/>
</dbReference>
<dbReference type="SUPFAM" id="SSF56042">
    <property type="entry name" value="PurM C-terminal domain-like"/>
    <property type="match status" value="2"/>
</dbReference>
<dbReference type="SUPFAM" id="SSF55326">
    <property type="entry name" value="PurM N-terminal domain-like"/>
    <property type="match status" value="2"/>
</dbReference>
<name>PURL_OCEIH</name>
<keyword id="KW-0067">ATP-binding</keyword>
<keyword id="KW-0963">Cytoplasm</keyword>
<keyword id="KW-0436">Ligase</keyword>
<keyword id="KW-0460">Magnesium</keyword>
<keyword id="KW-0479">Metal-binding</keyword>
<keyword id="KW-0547">Nucleotide-binding</keyword>
<keyword id="KW-0658">Purine biosynthesis</keyword>
<keyword id="KW-1185">Reference proteome</keyword>
<accession>Q8ES96</accession>
<proteinExistence type="inferred from homology"/>
<organism>
    <name type="scientific">Oceanobacillus iheyensis (strain DSM 14371 / CIP 107618 / JCM 11309 / KCTC 3954 / HTE831)</name>
    <dbReference type="NCBI Taxonomy" id="221109"/>
    <lineage>
        <taxon>Bacteria</taxon>
        <taxon>Bacillati</taxon>
        <taxon>Bacillota</taxon>
        <taxon>Bacilli</taxon>
        <taxon>Bacillales</taxon>
        <taxon>Bacillaceae</taxon>
        <taxon>Oceanobacillus</taxon>
    </lineage>
</organism>
<feature type="chain" id="PRO_0000100475" description="Phosphoribosylformylglycinamidine synthase subunit PurL">
    <location>
        <begin position="1"/>
        <end position="742"/>
    </location>
</feature>
<feature type="active site" evidence="1">
    <location>
        <position position="54"/>
    </location>
</feature>
<feature type="active site" description="Proton acceptor" evidence="1">
    <location>
        <position position="100"/>
    </location>
</feature>
<feature type="binding site" evidence="1">
    <location>
        <position position="57"/>
    </location>
    <ligand>
        <name>ATP</name>
        <dbReference type="ChEBI" id="CHEBI:30616"/>
    </ligand>
</feature>
<feature type="binding site" evidence="1">
    <location>
        <position position="96"/>
    </location>
    <ligand>
        <name>ATP</name>
        <dbReference type="ChEBI" id="CHEBI:30616"/>
    </ligand>
</feature>
<feature type="binding site" evidence="1">
    <location>
        <position position="98"/>
    </location>
    <ligand>
        <name>Mg(2+)</name>
        <dbReference type="ChEBI" id="CHEBI:18420"/>
        <label>1</label>
    </ligand>
</feature>
<feature type="binding site" evidence="1">
    <location>
        <begin position="99"/>
        <end position="102"/>
    </location>
    <ligand>
        <name>substrate</name>
    </ligand>
</feature>
<feature type="binding site" evidence="1">
    <location>
        <position position="121"/>
    </location>
    <ligand>
        <name>substrate</name>
    </ligand>
</feature>
<feature type="binding site" evidence="1">
    <location>
        <position position="122"/>
    </location>
    <ligand>
        <name>Mg(2+)</name>
        <dbReference type="ChEBI" id="CHEBI:18420"/>
        <label>2</label>
    </ligand>
</feature>
<feature type="binding site" evidence="1">
    <location>
        <position position="245"/>
    </location>
    <ligand>
        <name>substrate</name>
    </ligand>
</feature>
<feature type="binding site" evidence="1">
    <location>
        <position position="273"/>
    </location>
    <ligand>
        <name>Mg(2+)</name>
        <dbReference type="ChEBI" id="CHEBI:18420"/>
        <label>2</label>
    </ligand>
</feature>
<feature type="binding site" evidence="1">
    <location>
        <begin position="317"/>
        <end position="319"/>
    </location>
    <ligand>
        <name>substrate</name>
    </ligand>
</feature>
<feature type="binding site" evidence="1">
    <location>
        <position position="500"/>
    </location>
    <ligand>
        <name>ATP</name>
        <dbReference type="ChEBI" id="CHEBI:30616"/>
    </ligand>
</feature>
<feature type="binding site" evidence="1">
    <location>
        <position position="537"/>
    </location>
    <ligand>
        <name>ATP</name>
        <dbReference type="ChEBI" id="CHEBI:30616"/>
    </ligand>
</feature>
<feature type="binding site" evidence="1">
    <location>
        <position position="538"/>
    </location>
    <ligand>
        <name>Mg(2+)</name>
        <dbReference type="ChEBI" id="CHEBI:18420"/>
        <label>1</label>
    </ligand>
</feature>
<feature type="binding site" evidence="1">
    <location>
        <position position="540"/>
    </location>
    <ligand>
        <name>substrate</name>
    </ligand>
</feature>